<dbReference type="EMBL" id="CP000576">
    <property type="protein sequence ID" value="ABO17971.1"/>
    <property type="molecule type" value="Genomic_DNA"/>
</dbReference>
<dbReference type="RefSeq" id="WP_011863284.1">
    <property type="nucleotide sequence ID" value="NC_009091.1"/>
</dbReference>
<dbReference type="STRING" id="167546.P9301_13481"/>
<dbReference type="KEGG" id="pmg:P9301_13481"/>
<dbReference type="eggNOG" id="ENOG502Z7YX">
    <property type="taxonomic scope" value="Bacteria"/>
</dbReference>
<dbReference type="HOGENOM" id="CLU_095465_0_0_3"/>
<dbReference type="OrthoDB" id="7059574at2"/>
<dbReference type="Proteomes" id="UP000001430">
    <property type="component" value="Chromosome"/>
</dbReference>
<dbReference type="GO" id="GO:0009522">
    <property type="term" value="C:photosystem I"/>
    <property type="evidence" value="ECO:0007669"/>
    <property type="project" value="InterPro"/>
</dbReference>
<dbReference type="GO" id="GO:0031676">
    <property type="term" value="C:plasma membrane-derived thylakoid membrane"/>
    <property type="evidence" value="ECO:0007669"/>
    <property type="project" value="UniProtKB-SubCell"/>
</dbReference>
<dbReference type="GO" id="GO:0015979">
    <property type="term" value="P:photosynthesis"/>
    <property type="evidence" value="ECO:0007669"/>
    <property type="project" value="UniProtKB-UniRule"/>
</dbReference>
<dbReference type="HAMAP" id="MF_00437">
    <property type="entry name" value="Ycf4"/>
    <property type="match status" value="1"/>
</dbReference>
<dbReference type="InterPro" id="IPR003359">
    <property type="entry name" value="PSI_Ycf4_assembly"/>
</dbReference>
<dbReference type="NCBIfam" id="NF002712">
    <property type="entry name" value="PRK02542.1"/>
    <property type="match status" value="1"/>
</dbReference>
<dbReference type="Pfam" id="PF02392">
    <property type="entry name" value="Ycf4"/>
    <property type="match status" value="1"/>
</dbReference>
<comment type="function">
    <text evidence="1">Seems to be required for the assembly of the photosystem I complex.</text>
</comment>
<comment type="subcellular location">
    <subcellularLocation>
        <location evidence="1">Cellular thylakoid membrane</location>
        <topology evidence="1">Multi-pass membrane protein</topology>
    </subcellularLocation>
</comment>
<comment type="similarity">
    <text evidence="1">Belongs to the Ycf4 family.</text>
</comment>
<gene>
    <name evidence="1" type="primary">ycf4</name>
    <name type="ordered locus">P9301_13481</name>
</gene>
<feature type="chain" id="PRO_1000025946" description="Photosystem I assembly protein Ycf4">
    <location>
        <begin position="1"/>
        <end position="185"/>
    </location>
</feature>
<feature type="transmembrane region" description="Helical" evidence="1">
    <location>
        <begin position="24"/>
        <end position="44"/>
    </location>
</feature>
<feature type="transmembrane region" description="Helical" evidence="1">
    <location>
        <begin position="66"/>
        <end position="86"/>
    </location>
</feature>
<keyword id="KW-0472">Membrane</keyword>
<keyword id="KW-0602">Photosynthesis</keyword>
<keyword id="KW-1185">Reference proteome</keyword>
<keyword id="KW-0793">Thylakoid</keyword>
<keyword id="KW-0812">Transmembrane</keyword>
<keyword id="KW-1133">Transmembrane helix</keyword>
<organism>
    <name type="scientific">Prochlorococcus marinus (strain MIT 9301)</name>
    <dbReference type="NCBI Taxonomy" id="167546"/>
    <lineage>
        <taxon>Bacteria</taxon>
        <taxon>Bacillati</taxon>
        <taxon>Cyanobacteriota</taxon>
        <taxon>Cyanophyceae</taxon>
        <taxon>Synechococcales</taxon>
        <taxon>Prochlorococcaceae</taxon>
        <taxon>Prochlorococcus</taxon>
    </lineage>
</organism>
<evidence type="ECO:0000255" key="1">
    <source>
        <dbReference type="HAMAP-Rule" id="MF_00437"/>
    </source>
</evidence>
<protein>
    <recommendedName>
        <fullName evidence="1">Photosystem I assembly protein Ycf4</fullName>
    </recommendedName>
</protein>
<sequence length="185" mass="20505">MNSDLKSFDKIEQKIGGSRKISNYIIGGMLTIGGIGFLLASISSYTGRDLLPLGNPSTLLFIPQGIIMGAYGVIANLLNFYLWYLVYINFGSGSNYFDKSSKSIEIRRKGLFKDIEVKLNFDEIKSVKLDISEGFNPRRRIALVLKGRKKPLPLSGAGELKPLLQVEEEGARLAKFLDVNLEGLK</sequence>
<reference key="1">
    <citation type="journal article" date="2007" name="PLoS Genet.">
        <title>Patterns and implications of gene gain and loss in the evolution of Prochlorococcus.</title>
        <authorList>
            <person name="Kettler G.C."/>
            <person name="Martiny A.C."/>
            <person name="Huang K."/>
            <person name="Zucker J."/>
            <person name="Coleman M.L."/>
            <person name="Rodrigue S."/>
            <person name="Chen F."/>
            <person name="Lapidus A."/>
            <person name="Ferriera S."/>
            <person name="Johnson J."/>
            <person name="Steglich C."/>
            <person name="Church G.M."/>
            <person name="Richardson P."/>
            <person name="Chisholm S.W."/>
        </authorList>
    </citation>
    <scope>NUCLEOTIDE SEQUENCE [LARGE SCALE GENOMIC DNA]</scope>
    <source>
        <strain>MIT 9301</strain>
    </source>
</reference>
<proteinExistence type="inferred from homology"/>
<name>YCF4_PROM0</name>
<accession>A3PDZ6</accession>